<accession>B6J630</accession>
<feature type="chain" id="PRO_1000099228" description="Diaminopimelate epimerase">
    <location>
        <begin position="1"/>
        <end position="276"/>
    </location>
</feature>
<feature type="active site" description="Proton donor" evidence="1">
    <location>
        <position position="75"/>
    </location>
</feature>
<feature type="active site" description="Proton acceptor" evidence="1">
    <location>
        <position position="219"/>
    </location>
</feature>
<feature type="binding site" evidence="1">
    <location>
        <position position="13"/>
    </location>
    <ligand>
        <name>substrate</name>
    </ligand>
</feature>
<feature type="binding site" evidence="1">
    <location>
        <position position="46"/>
    </location>
    <ligand>
        <name>substrate</name>
    </ligand>
</feature>
<feature type="binding site" evidence="1">
    <location>
        <position position="66"/>
    </location>
    <ligand>
        <name>substrate</name>
    </ligand>
</feature>
<feature type="binding site" evidence="1">
    <location>
        <begin position="76"/>
        <end position="77"/>
    </location>
    <ligand>
        <name>substrate</name>
    </ligand>
</feature>
<feature type="binding site" evidence="1">
    <location>
        <position position="159"/>
    </location>
    <ligand>
        <name>substrate</name>
    </ligand>
</feature>
<feature type="binding site" evidence="1">
    <location>
        <position position="192"/>
    </location>
    <ligand>
        <name>substrate</name>
    </ligand>
</feature>
<feature type="binding site" evidence="1">
    <location>
        <begin position="210"/>
        <end position="211"/>
    </location>
    <ligand>
        <name>substrate</name>
    </ligand>
</feature>
<feature type="binding site" evidence="1">
    <location>
        <begin position="220"/>
        <end position="221"/>
    </location>
    <ligand>
        <name>substrate</name>
    </ligand>
</feature>
<feature type="site" description="Could be important to modulate the pK values of the two catalytic cysteine residues" evidence="1">
    <location>
        <position position="161"/>
    </location>
</feature>
<feature type="site" description="Could be important to modulate the pK values of the two catalytic cysteine residues" evidence="1">
    <location>
        <position position="210"/>
    </location>
</feature>
<feature type="site" description="Important for dimerization" evidence="1">
    <location>
        <position position="270"/>
    </location>
</feature>
<evidence type="ECO:0000255" key="1">
    <source>
        <dbReference type="HAMAP-Rule" id="MF_00197"/>
    </source>
</evidence>
<organism>
    <name type="scientific">Coxiella burnetii (strain CbuK_Q154)</name>
    <name type="common">Coxiella burnetii (strain Q154)</name>
    <dbReference type="NCBI Taxonomy" id="434924"/>
    <lineage>
        <taxon>Bacteria</taxon>
        <taxon>Pseudomonadati</taxon>
        <taxon>Pseudomonadota</taxon>
        <taxon>Gammaproteobacteria</taxon>
        <taxon>Legionellales</taxon>
        <taxon>Coxiellaceae</taxon>
        <taxon>Coxiella</taxon>
    </lineage>
</organism>
<sequence>MKVNFTKMQGSGNDFVVIDATKTPFQLTTSQIQKMANRRFGVGFDQLLVIEPPKNNSVDFHFRIFNADGSEVGQCGNGARCIARFIRAHQLSDREELRVSTLNEVLELKIQPDGKVSVKMGVPRFEPTEIPFIASGVANFYDIAVDNQIVKLGVVNIGNPHAIIPVERINAEEVGKLGARLSVHECFPEGANVGFMQVIDPQNIRLRVYERGTGETLACGSNACAAVAVGRRCGLLQERVVVSQPGGSLTIDWQGPLTPVTMTGPATTVFCGEWLD</sequence>
<reference key="1">
    <citation type="journal article" date="2009" name="Infect. Immun.">
        <title>Comparative genomics reveal extensive transposon-mediated genomic plasticity and diversity among potential effector proteins within the genus Coxiella.</title>
        <authorList>
            <person name="Beare P.A."/>
            <person name="Unsworth N."/>
            <person name="Andoh M."/>
            <person name="Voth D.E."/>
            <person name="Omsland A."/>
            <person name="Gilk S.D."/>
            <person name="Williams K.P."/>
            <person name="Sobral B.W."/>
            <person name="Kupko J.J. III"/>
            <person name="Porcella S.F."/>
            <person name="Samuel J.E."/>
            <person name="Heinzen R.A."/>
        </authorList>
    </citation>
    <scope>NUCLEOTIDE SEQUENCE [LARGE SCALE GENOMIC DNA]</scope>
    <source>
        <strain>CbuK_Q154</strain>
    </source>
</reference>
<dbReference type="EC" id="5.1.1.7" evidence="1"/>
<dbReference type="EMBL" id="CP001020">
    <property type="protein sequence ID" value="ACJ21121.1"/>
    <property type="molecule type" value="Genomic_DNA"/>
</dbReference>
<dbReference type="RefSeq" id="WP_005769680.1">
    <property type="nucleotide sequence ID" value="NC_011528.1"/>
</dbReference>
<dbReference type="SMR" id="B6J630"/>
<dbReference type="KEGG" id="cbc:CbuK_2021"/>
<dbReference type="HOGENOM" id="CLU_053306_1_1_6"/>
<dbReference type="UniPathway" id="UPA00034">
    <property type="reaction ID" value="UER00025"/>
</dbReference>
<dbReference type="GO" id="GO:0005829">
    <property type="term" value="C:cytosol"/>
    <property type="evidence" value="ECO:0007669"/>
    <property type="project" value="TreeGrafter"/>
</dbReference>
<dbReference type="GO" id="GO:0008837">
    <property type="term" value="F:diaminopimelate epimerase activity"/>
    <property type="evidence" value="ECO:0007669"/>
    <property type="project" value="UniProtKB-UniRule"/>
</dbReference>
<dbReference type="GO" id="GO:0009089">
    <property type="term" value="P:lysine biosynthetic process via diaminopimelate"/>
    <property type="evidence" value="ECO:0007669"/>
    <property type="project" value="UniProtKB-UniRule"/>
</dbReference>
<dbReference type="FunFam" id="3.10.310.10:FF:000001">
    <property type="entry name" value="Diaminopimelate epimerase"/>
    <property type="match status" value="1"/>
</dbReference>
<dbReference type="Gene3D" id="3.10.310.10">
    <property type="entry name" value="Diaminopimelate Epimerase, Chain A, domain 1"/>
    <property type="match status" value="2"/>
</dbReference>
<dbReference type="HAMAP" id="MF_00197">
    <property type="entry name" value="DAP_epimerase"/>
    <property type="match status" value="1"/>
</dbReference>
<dbReference type="InterPro" id="IPR018510">
    <property type="entry name" value="DAP_epimerase_AS"/>
</dbReference>
<dbReference type="InterPro" id="IPR001653">
    <property type="entry name" value="DAP_epimerase_DapF"/>
</dbReference>
<dbReference type="NCBIfam" id="TIGR00652">
    <property type="entry name" value="DapF"/>
    <property type="match status" value="1"/>
</dbReference>
<dbReference type="PANTHER" id="PTHR31689:SF0">
    <property type="entry name" value="DIAMINOPIMELATE EPIMERASE"/>
    <property type="match status" value="1"/>
</dbReference>
<dbReference type="PANTHER" id="PTHR31689">
    <property type="entry name" value="DIAMINOPIMELATE EPIMERASE, CHLOROPLASTIC"/>
    <property type="match status" value="1"/>
</dbReference>
<dbReference type="Pfam" id="PF01678">
    <property type="entry name" value="DAP_epimerase"/>
    <property type="match status" value="2"/>
</dbReference>
<dbReference type="SUPFAM" id="SSF54506">
    <property type="entry name" value="Diaminopimelate epimerase-like"/>
    <property type="match status" value="2"/>
</dbReference>
<dbReference type="PROSITE" id="PS01326">
    <property type="entry name" value="DAP_EPIMERASE"/>
    <property type="match status" value="1"/>
</dbReference>
<protein>
    <recommendedName>
        <fullName evidence="1">Diaminopimelate epimerase</fullName>
        <shortName evidence="1">DAP epimerase</shortName>
        <ecNumber evidence="1">5.1.1.7</ecNumber>
    </recommendedName>
    <alternativeName>
        <fullName evidence="1">PLP-independent amino acid racemase</fullName>
    </alternativeName>
</protein>
<proteinExistence type="inferred from homology"/>
<comment type="function">
    <text evidence="1">Catalyzes the stereoinversion of LL-2,6-diaminopimelate (L,L-DAP) to meso-diaminopimelate (meso-DAP), a precursor of L-lysine and an essential component of the bacterial peptidoglycan.</text>
</comment>
<comment type="catalytic activity">
    <reaction evidence="1">
        <text>(2S,6S)-2,6-diaminopimelate = meso-2,6-diaminopimelate</text>
        <dbReference type="Rhea" id="RHEA:15393"/>
        <dbReference type="ChEBI" id="CHEBI:57609"/>
        <dbReference type="ChEBI" id="CHEBI:57791"/>
        <dbReference type="EC" id="5.1.1.7"/>
    </reaction>
</comment>
<comment type="pathway">
    <text evidence="1">Amino-acid biosynthesis; L-lysine biosynthesis via DAP pathway; DL-2,6-diaminopimelate from LL-2,6-diaminopimelate: step 1/1.</text>
</comment>
<comment type="subunit">
    <text evidence="1">Homodimer.</text>
</comment>
<comment type="subcellular location">
    <subcellularLocation>
        <location evidence="1">Cytoplasm</location>
    </subcellularLocation>
</comment>
<comment type="similarity">
    <text evidence="1">Belongs to the diaminopimelate epimerase family.</text>
</comment>
<keyword id="KW-0028">Amino-acid biosynthesis</keyword>
<keyword id="KW-0963">Cytoplasm</keyword>
<keyword id="KW-0413">Isomerase</keyword>
<keyword id="KW-0457">Lysine biosynthesis</keyword>
<gene>
    <name evidence="1" type="primary">dapF</name>
    <name type="ordered locus">CbuK_2021</name>
</gene>
<name>DAPF_COXB1</name>